<keyword id="KW-0963">Cytoplasm</keyword>
<keyword id="KW-0444">Lipid biosynthesis</keyword>
<keyword id="KW-0443">Lipid metabolism</keyword>
<keyword id="KW-0594">Phospholipid biosynthesis</keyword>
<keyword id="KW-1208">Phospholipid metabolism</keyword>
<keyword id="KW-0808">Transferase</keyword>
<evidence type="ECO:0000255" key="1">
    <source>
        <dbReference type="HAMAP-Rule" id="MF_00019"/>
    </source>
</evidence>
<evidence type="ECO:0000305" key="2"/>
<gene>
    <name evidence="1" type="primary">plsX</name>
    <name type="ordered locus">KPN78578_10600</name>
    <name type="ORF">KPN_01088</name>
</gene>
<sequence length="365" mass="39066">MTRLTLALDVMGGDFGPSVTVPAALQALNSNSQLTLLLVGDPDAITPLLAKADFEQRSRLQIIPAQSVIASDARPAQAIRSSRGSSMRVALELVKEGRAQACVSAGNTGALMGLAKLLLKPIEGIERPALVTVLPHQQKGKTVVLDLGANVDCDSTMLVQFAVMGAVLAEEVVGIANPRVALLNIGEEEMKGLGSIRDAAAVLKTLPSLNYIGYLEANELLTGKTDVLVCDGFTGNVTLKTMEGVVRMFLSLLKSQGEGKKRSWWLLLLKRWLQKSLARRFSHLNPDQYNGACLLGLRGSVIKSHGAANQRAFSVAIEQAVQAVQRQIPQRIAARLESLYPAGFELPESDSDVNARQQSGTNGHD</sequence>
<comment type="function">
    <text evidence="1">Catalyzes the reversible formation of acyl-phosphate (acyl-PO(4)) from acyl-[acyl-carrier-protein] (acyl-ACP). This enzyme utilizes acyl-ACP as fatty acyl donor, but not acyl-CoA.</text>
</comment>
<comment type="catalytic activity">
    <reaction evidence="1">
        <text>a fatty acyl-[ACP] + phosphate = an acyl phosphate + holo-[ACP]</text>
        <dbReference type="Rhea" id="RHEA:42292"/>
        <dbReference type="Rhea" id="RHEA-COMP:9685"/>
        <dbReference type="Rhea" id="RHEA-COMP:14125"/>
        <dbReference type="ChEBI" id="CHEBI:43474"/>
        <dbReference type="ChEBI" id="CHEBI:59918"/>
        <dbReference type="ChEBI" id="CHEBI:64479"/>
        <dbReference type="ChEBI" id="CHEBI:138651"/>
        <dbReference type="EC" id="2.3.1.274"/>
    </reaction>
</comment>
<comment type="pathway">
    <text evidence="1">Lipid metabolism; phospholipid metabolism.</text>
</comment>
<comment type="subunit">
    <text evidence="1">Homodimer. Probably interacts with PlsY.</text>
</comment>
<comment type="subcellular location">
    <subcellularLocation>
        <location evidence="1">Cytoplasm</location>
    </subcellularLocation>
    <text evidence="1">Associated with the membrane possibly through PlsY.</text>
</comment>
<comment type="similarity">
    <text evidence="1">Belongs to the PlsX family.</text>
</comment>
<comment type="sequence caution" evidence="2">
    <conflict type="erroneous initiation">
        <sequence resource="EMBL-CDS" id="ABR76521"/>
    </conflict>
</comment>
<dbReference type="EC" id="2.3.1.274" evidence="1"/>
<dbReference type="EMBL" id="CP000647">
    <property type="protein sequence ID" value="ABR76521.1"/>
    <property type="status" value="ALT_INIT"/>
    <property type="molecule type" value="Genomic_DNA"/>
</dbReference>
<dbReference type="RefSeq" id="WP_004224085.1">
    <property type="nucleotide sequence ID" value="NC_009648.1"/>
</dbReference>
<dbReference type="SMR" id="A6T7F0"/>
<dbReference type="STRING" id="272620.KPN_01088"/>
<dbReference type="PaxDb" id="272620-KPN_01088"/>
<dbReference type="EnsemblBacteria" id="ABR76521">
    <property type="protein sequence ID" value="ABR76521"/>
    <property type="gene ID" value="KPN_01088"/>
</dbReference>
<dbReference type="KEGG" id="kpn:KPN_01088"/>
<dbReference type="HOGENOM" id="CLU_039379_1_0_6"/>
<dbReference type="UniPathway" id="UPA00085"/>
<dbReference type="Proteomes" id="UP000000265">
    <property type="component" value="Chromosome"/>
</dbReference>
<dbReference type="GO" id="GO:0005737">
    <property type="term" value="C:cytoplasm"/>
    <property type="evidence" value="ECO:0007669"/>
    <property type="project" value="UniProtKB-SubCell"/>
</dbReference>
<dbReference type="GO" id="GO:0043811">
    <property type="term" value="F:phosphate:acyl-[acyl carrier protein] acyltransferase activity"/>
    <property type="evidence" value="ECO:0007669"/>
    <property type="project" value="UniProtKB-UniRule"/>
</dbReference>
<dbReference type="GO" id="GO:0006633">
    <property type="term" value="P:fatty acid biosynthetic process"/>
    <property type="evidence" value="ECO:0007669"/>
    <property type="project" value="UniProtKB-UniRule"/>
</dbReference>
<dbReference type="GO" id="GO:0008654">
    <property type="term" value="P:phospholipid biosynthetic process"/>
    <property type="evidence" value="ECO:0007669"/>
    <property type="project" value="UniProtKB-KW"/>
</dbReference>
<dbReference type="FunFam" id="3.40.718.10:FF:000008">
    <property type="entry name" value="Phosphate acyltransferase"/>
    <property type="match status" value="1"/>
</dbReference>
<dbReference type="Gene3D" id="3.40.718.10">
    <property type="entry name" value="Isopropylmalate Dehydrogenase"/>
    <property type="match status" value="1"/>
</dbReference>
<dbReference type="HAMAP" id="MF_00019">
    <property type="entry name" value="PlsX"/>
    <property type="match status" value="1"/>
</dbReference>
<dbReference type="InterPro" id="IPR003664">
    <property type="entry name" value="FA_synthesis"/>
</dbReference>
<dbReference type="InterPro" id="IPR012281">
    <property type="entry name" value="Phospholipid_synth_PlsX-like"/>
</dbReference>
<dbReference type="NCBIfam" id="TIGR00182">
    <property type="entry name" value="plsX"/>
    <property type="match status" value="1"/>
</dbReference>
<dbReference type="PANTHER" id="PTHR30100">
    <property type="entry name" value="FATTY ACID/PHOSPHOLIPID SYNTHESIS PROTEIN PLSX"/>
    <property type="match status" value="1"/>
</dbReference>
<dbReference type="PANTHER" id="PTHR30100:SF1">
    <property type="entry name" value="PHOSPHATE ACYLTRANSFERASE"/>
    <property type="match status" value="1"/>
</dbReference>
<dbReference type="Pfam" id="PF02504">
    <property type="entry name" value="FA_synthesis"/>
    <property type="match status" value="1"/>
</dbReference>
<dbReference type="PIRSF" id="PIRSF002465">
    <property type="entry name" value="Phsphlp_syn_PlsX"/>
    <property type="match status" value="1"/>
</dbReference>
<dbReference type="SUPFAM" id="SSF53659">
    <property type="entry name" value="Isocitrate/Isopropylmalate dehydrogenase-like"/>
    <property type="match status" value="1"/>
</dbReference>
<name>PLSX_KLEP7</name>
<accession>A6T7F0</accession>
<feature type="chain" id="PRO_0000329233" description="Phosphate acyltransferase">
    <location>
        <begin position="1"/>
        <end position="365"/>
    </location>
</feature>
<proteinExistence type="inferred from homology"/>
<organism>
    <name type="scientific">Klebsiella pneumoniae subsp. pneumoniae (strain ATCC 700721 / MGH 78578)</name>
    <dbReference type="NCBI Taxonomy" id="272620"/>
    <lineage>
        <taxon>Bacteria</taxon>
        <taxon>Pseudomonadati</taxon>
        <taxon>Pseudomonadota</taxon>
        <taxon>Gammaproteobacteria</taxon>
        <taxon>Enterobacterales</taxon>
        <taxon>Enterobacteriaceae</taxon>
        <taxon>Klebsiella/Raoultella group</taxon>
        <taxon>Klebsiella</taxon>
        <taxon>Klebsiella pneumoniae complex</taxon>
    </lineage>
</organism>
<protein>
    <recommendedName>
        <fullName evidence="1">Phosphate acyltransferase</fullName>
        <ecNumber evidence="1">2.3.1.274</ecNumber>
    </recommendedName>
    <alternativeName>
        <fullName evidence="1">Acyl-ACP phosphotransacylase</fullName>
    </alternativeName>
    <alternativeName>
        <fullName evidence="1">Acyl-[acyl-carrier-protein]--phosphate acyltransferase</fullName>
    </alternativeName>
    <alternativeName>
        <fullName evidence="1">Phosphate-acyl-ACP acyltransferase</fullName>
    </alternativeName>
</protein>
<reference key="1">
    <citation type="submission" date="2006-09" db="EMBL/GenBank/DDBJ databases">
        <authorList>
            <consortium name="The Klebsiella pneumonia Genome Sequencing Project"/>
            <person name="McClelland M."/>
            <person name="Sanderson E.K."/>
            <person name="Spieth J."/>
            <person name="Clifton W.S."/>
            <person name="Latreille P."/>
            <person name="Sabo A."/>
            <person name="Pepin K."/>
            <person name="Bhonagiri V."/>
            <person name="Porwollik S."/>
            <person name="Ali J."/>
            <person name="Wilson R.K."/>
        </authorList>
    </citation>
    <scope>NUCLEOTIDE SEQUENCE [LARGE SCALE GENOMIC DNA]</scope>
    <source>
        <strain>ATCC 700721 / MGH 78578</strain>
    </source>
</reference>